<sequence>MKDEVALLATVTLLGVLLQAYFSLQVIRARRAHRVSPPLTTGPPEFERVYRAQVNCSEYFPLFLATLWVAGVYFHEGAAALCGLVYLFTRLRYFWGYARSAQLRLAPLYASARALWLLLALATLGLLAHFLPAAARAALLRLLRALLRTA</sequence>
<proteinExistence type="evidence at transcript level"/>
<feature type="chain" id="PRO_0000378087" description="Leukotriene C4 synthase">
    <location>
        <begin position="1"/>
        <end position="150"/>
    </location>
</feature>
<feature type="topological domain" description="Cytoplasmic" evidence="1">
    <location>
        <begin position="1"/>
        <end position="6"/>
    </location>
</feature>
<feature type="transmembrane region" description="Helical" evidence="1">
    <location>
        <begin position="7"/>
        <end position="27"/>
    </location>
</feature>
<feature type="topological domain" description="Lumenal" evidence="1">
    <location>
        <begin position="28"/>
        <end position="48"/>
    </location>
</feature>
<feature type="transmembrane region" description="Helical" evidence="1">
    <location>
        <begin position="49"/>
        <end position="69"/>
    </location>
</feature>
<feature type="topological domain" description="Cytoplasmic" evidence="1">
    <location>
        <begin position="70"/>
        <end position="73"/>
    </location>
</feature>
<feature type="transmembrane region" description="Helical" evidence="1">
    <location>
        <begin position="74"/>
        <end position="94"/>
    </location>
</feature>
<feature type="topological domain" description="Lumenal" evidence="1">
    <location>
        <begin position="95"/>
        <end position="104"/>
    </location>
</feature>
<feature type="transmembrane region" description="Helical" evidence="1">
    <location>
        <begin position="105"/>
        <end position="124"/>
    </location>
</feature>
<feature type="topological domain" description="Cytoplasmic" evidence="1">
    <location>
        <begin position="125"/>
        <end position="150"/>
    </location>
</feature>
<feature type="active site" description="Proton donor" evidence="1">
    <location>
        <position position="31"/>
    </location>
</feature>
<feature type="active site" description="Proton acceptor" evidence="1">
    <location>
        <position position="104"/>
    </location>
</feature>
<feature type="binding site" evidence="1">
    <location>
        <position position="30"/>
    </location>
    <ligand>
        <name>glutathione</name>
        <dbReference type="ChEBI" id="CHEBI:57925"/>
    </ligand>
</feature>
<feature type="binding site" evidence="1">
    <location>
        <begin position="51"/>
        <end position="55"/>
    </location>
    <ligand>
        <name>glutathione</name>
        <dbReference type="ChEBI" id="CHEBI:57925"/>
    </ligand>
</feature>
<feature type="binding site" evidence="1">
    <location>
        <begin position="58"/>
        <end position="59"/>
    </location>
    <ligand>
        <name>glutathione</name>
        <dbReference type="ChEBI" id="CHEBI:57925"/>
    </ligand>
</feature>
<feature type="binding site" evidence="1">
    <location>
        <begin position="93"/>
        <end position="97"/>
    </location>
    <ligand>
        <name>glutathione</name>
        <dbReference type="ChEBI" id="CHEBI:57925"/>
    </ligand>
</feature>
<feature type="modified residue" description="Phosphoserine" evidence="1">
    <location>
        <position position="36"/>
    </location>
</feature>
<organism>
    <name type="scientific">Cavia porcellus</name>
    <name type="common">Guinea pig</name>
    <dbReference type="NCBI Taxonomy" id="10141"/>
    <lineage>
        <taxon>Eukaryota</taxon>
        <taxon>Metazoa</taxon>
        <taxon>Chordata</taxon>
        <taxon>Craniata</taxon>
        <taxon>Vertebrata</taxon>
        <taxon>Euteleostomi</taxon>
        <taxon>Mammalia</taxon>
        <taxon>Eutheria</taxon>
        <taxon>Euarchontoglires</taxon>
        <taxon>Glires</taxon>
        <taxon>Rodentia</taxon>
        <taxon>Hystricomorpha</taxon>
        <taxon>Caviidae</taxon>
        <taxon>Cavia</taxon>
    </lineage>
</organism>
<reference key="1">
    <citation type="submission" date="2005-06" db="EMBL/GenBank/DDBJ databases">
        <title>Molecular cloning, expression, and characterization of guinea pig leukotriene C4 synthase.</title>
        <authorList>
            <person name="Irikura D."/>
            <person name="Lam B.K."/>
            <person name="Austen K.F."/>
            <person name="Kanaoka Y."/>
        </authorList>
    </citation>
    <scope>NUCLEOTIDE SEQUENCE [MRNA]</scope>
    <source>
        <strain>Hartley</strain>
        <tissue>Lung</tissue>
    </source>
</reference>
<keyword id="KW-0256">Endoplasmic reticulum</keyword>
<keyword id="KW-0434">Leukotriene biosynthesis</keyword>
<keyword id="KW-0456">Lyase</keyword>
<keyword id="KW-0472">Membrane</keyword>
<keyword id="KW-0539">Nucleus</keyword>
<keyword id="KW-0597">Phosphoprotein</keyword>
<keyword id="KW-1185">Reference proteome</keyword>
<keyword id="KW-0808">Transferase</keyword>
<keyword id="KW-0812">Transmembrane</keyword>
<keyword id="KW-1133">Transmembrane helix</keyword>
<accession>A6XA80</accession>
<dbReference type="EC" id="4.4.1.20" evidence="1"/>
<dbReference type="EC" id="2.5.1.-" evidence="1"/>
<dbReference type="EMBL" id="DQ090886">
    <property type="protein sequence ID" value="AAZ41359.1"/>
    <property type="molecule type" value="mRNA"/>
</dbReference>
<dbReference type="SMR" id="A6XA80"/>
<dbReference type="FunCoup" id="A6XA80">
    <property type="interactions" value="286"/>
</dbReference>
<dbReference type="STRING" id="10141.ENSCPOP00000016273"/>
<dbReference type="ChEMBL" id="CHEMBL1909043"/>
<dbReference type="DrugCentral" id="A6XA80"/>
<dbReference type="eggNOG" id="ENOG502RZYY">
    <property type="taxonomic scope" value="Eukaryota"/>
</dbReference>
<dbReference type="HOGENOM" id="CLU_110291_3_2_1"/>
<dbReference type="InParanoid" id="A6XA80"/>
<dbReference type="UniPathway" id="UPA00879"/>
<dbReference type="Proteomes" id="UP000005447">
    <property type="component" value="Unassembled WGS sequence"/>
</dbReference>
<dbReference type="GO" id="GO:0005789">
    <property type="term" value="C:endoplasmic reticulum membrane"/>
    <property type="evidence" value="ECO:0000250"/>
    <property type="project" value="UniProtKB"/>
</dbReference>
<dbReference type="GO" id="GO:0031965">
    <property type="term" value="C:nuclear membrane"/>
    <property type="evidence" value="ECO:0000250"/>
    <property type="project" value="UniProtKB"/>
</dbReference>
<dbReference type="GO" id="GO:0005640">
    <property type="term" value="C:nuclear outer membrane"/>
    <property type="evidence" value="ECO:0000250"/>
    <property type="project" value="UniProtKB"/>
</dbReference>
<dbReference type="GO" id="GO:0008047">
    <property type="term" value="F:enzyme activator activity"/>
    <property type="evidence" value="ECO:0007669"/>
    <property type="project" value="InterPro"/>
</dbReference>
<dbReference type="GO" id="GO:0004602">
    <property type="term" value="F:glutathione peroxidase activity"/>
    <property type="evidence" value="ECO:0007669"/>
    <property type="project" value="TreeGrafter"/>
</dbReference>
<dbReference type="GO" id="GO:0004364">
    <property type="term" value="F:glutathione transferase activity"/>
    <property type="evidence" value="ECO:0007669"/>
    <property type="project" value="TreeGrafter"/>
</dbReference>
<dbReference type="GO" id="GO:0004464">
    <property type="term" value="F:leukotriene-C4 synthase activity"/>
    <property type="evidence" value="ECO:0000250"/>
    <property type="project" value="UniProtKB"/>
</dbReference>
<dbReference type="GO" id="GO:0019370">
    <property type="term" value="P:leukotriene biosynthetic process"/>
    <property type="evidence" value="ECO:0007669"/>
    <property type="project" value="UniProtKB-KW"/>
</dbReference>
<dbReference type="GO" id="GO:0006691">
    <property type="term" value="P:leukotriene metabolic process"/>
    <property type="evidence" value="ECO:0000250"/>
    <property type="project" value="UniProtKB"/>
</dbReference>
<dbReference type="GO" id="GO:0042759">
    <property type="term" value="P:long-chain fatty acid biosynthetic process"/>
    <property type="evidence" value="ECO:0000250"/>
    <property type="project" value="UniProtKB"/>
</dbReference>
<dbReference type="FunFam" id="1.20.120.550:FF:000003">
    <property type="entry name" value="Leukotriene C4 synthase"/>
    <property type="match status" value="1"/>
</dbReference>
<dbReference type="Gene3D" id="1.20.120.550">
    <property type="entry name" value="Membrane associated eicosanoid/glutathione metabolism-like domain"/>
    <property type="match status" value="1"/>
</dbReference>
<dbReference type="InterPro" id="IPR001446">
    <property type="entry name" value="5_LipOase_AP"/>
</dbReference>
<dbReference type="InterPro" id="IPR018295">
    <property type="entry name" value="FLAP/GST2/LTC4S_CS"/>
</dbReference>
<dbReference type="InterPro" id="IPR050997">
    <property type="entry name" value="MAPEG"/>
</dbReference>
<dbReference type="InterPro" id="IPR023352">
    <property type="entry name" value="MAPEG-like_dom_sf"/>
</dbReference>
<dbReference type="InterPro" id="IPR001129">
    <property type="entry name" value="Membr-assoc_MAPEG"/>
</dbReference>
<dbReference type="PANTHER" id="PTHR10250:SF4">
    <property type="entry name" value="LEUKOTRIENE C4 SYNTHASE"/>
    <property type="match status" value="1"/>
</dbReference>
<dbReference type="PANTHER" id="PTHR10250">
    <property type="entry name" value="MICROSOMAL GLUTATHIONE S-TRANSFERASE"/>
    <property type="match status" value="1"/>
</dbReference>
<dbReference type="Pfam" id="PF01124">
    <property type="entry name" value="MAPEG"/>
    <property type="match status" value="1"/>
</dbReference>
<dbReference type="PRINTS" id="PR00488">
    <property type="entry name" value="5LPOXGNASEAP"/>
</dbReference>
<dbReference type="SUPFAM" id="SSF161084">
    <property type="entry name" value="MAPEG domain-like"/>
    <property type="match status" value="1"/>
</dbReference>
<dbReference type="PROSITE" id="PS01297">
    <property type="entry name" value="FLAP_GST2_LTC4S"/>
    <property type="match status" value="1"/>
</dbReference>
<protein>
    <recommendedName>
        <fullName>Leukotriene C4 synthase</fullName>
        <shortName>LTC4 synthase</shortName>
        <ecNumber evidence="1">4.4.1.20</ecNumber>
    </recommendedName>
    <alternativeName>
        <fullName>Glutathione S-transferase LTC4</fullName>
        <ecNumber evidence="1">2.5.1.-</ecNumber>
    </alternativeName>
    <alternativeName>
        <fullName>Leukotriene-C(4) synthase</fullName>
    </alternativeName>
</protein>
<name>LTC4S_CAVPO</name>
<gene>
    <name type="primary">LTC4S</name>
</gene>
<evidence type="ECO:0000250" key="1">
    <source>
        <dbReference type="UniProtKB" id="Q16873"/>
    </source>
</evidence>
<evidence type="ECO:0000305" key="2"/>
<comment type="function">
    <text evidence="1">Catalyzes the conjugation of leukotriene A4 with reduced glutathione (GSH) to form leukotriene C4 with high specificity. Can also catalyze the transfer of a glutathionyl group from glutathione (GSH) to 13(S),14(S)-epoxy-docosahexaenoic acid to form maresin conjugate in tissue regeneration 1 (MCTR1), a bioactive lipid mediator that possess potent anti-inflammatory and proresolving actions.</text>
</comment>
<comment type="catalytic activity">
    <reaction evidence="1">
        <text>leukotriene C4 = leukotriene A4 + glutathione</text>
        <dbReference type="Rhea" id="RHEA:17617"/>
        <dbReference type="ChEBI" id="CHEBI:57463"/>
        <dbReference type="ChEBI" id="CHEBI:57925"/>
        <dbReference type="ChEBI" id="CHEBI:57973"/>
        <dbReference type="EC" id="4.4.1.20"/>
    </reaction>
    <physiologicalReaction direction="right-to-left" evidence="1">
        <dbReference type="Rhea" id="RHEA:17619"/>
    </physiologicalReaction>
</comment>
<comment type="catalytic activity">
    <reaction evidence="1">
        <text>(13S,14S)-epoxy-(4Z,7Z,9E,11E,16Z,19Z)-docosahexaenoate + glutathione = (13R)-S-glutathionyl-(14S)-hydroxy-(4Z,7Z,9E,11E,16Z,19Z)-docosahexaenoate</text>
        <dbReference type="Rhea" id="RHEA:53508"/>
        <dbReference type="ChEBI" id="CHEBI:57925"/>
        <dbReference type="ChEBI" id="CHEBI:131958"/>
        <dbReference type="ChEBI" id="CHEBI:137407"/>
    </reaction>
    <physiologicalReaction direction="left-to-right" evidence="1">
        <dbReference type="Rhea" id="RHEA:53509"/>
    </physiologicalReaction>
</comment>
<comment type="activity regulation">
    <text evidence="1">Inhibited by MK886.</text>
</comment>
<comment type="pathway">
    <text evidence="1">Lipid metabolism; leukotriene C4 biosynthesis.</text>
</comment>
<comment type="subunit">
    <text evidence="1">Homotrimer. Interacts with ALOX5AP and ALOX5.</text>
</comment>
<comment type="subcellular location">
    <subcellularLocation>
        <location evidence="1">Nucleus outer membrane</location>
        <topology evidence="1">Multi-pass membrane protein</topology>
    </subcellularLocation>
    <subcellularLocation>
        <location evidence="1">Endoplasmic reticulum membrane</location>
        <topology evidence="1">Multi-pass membrane protein</topology>
    </subcellularLocation>
    <subcellularLocation>
        <location evidence="1">Nucleus membrane</location>
        <topology evidence="1">Multi-pass membrane protein</topology>
    </subcellularLocation>
</comment>
<comment type="PTM">
    <text evidence="1">Phosphorylation at Ser-36 by RPS6KB1 inhibits the leukotriene-C4 synthase activity.</text>
</comment>
<comment type="similarity">
    <text evidence="2">Belongs to the MAPEG family.</text>
</comment>